<protein>
    <recommendedName>
        <fullName>Low calcium response locus protein D</fullName>
    </recommendedName>
</protein>
<accession>P69956</accession>
<accession>P31487</accession>
<accession>Q56976</accession>
<accession>Q663K6</accession>
<gene>
    <name type="primary">lcrD</name>
    <name type="ordered locus">pYV0060</name>
</gene>
<geneLocation type="plasmid">
    <name>pIB1</name>
</geneLocation>
<geneLocation type="plasmid">
    <name>pYV</name>
</geneLocation>
<proteinExistence type="inferred from homology"/>
<sequence>MNPHDLEWLNRIGERKDIMLAVLLLAVVFMMVLPLPPLVLDILIAVNMTISVVLLMIAIYINSPLQFSAFPAVLLVTTLFRLALSVSTTRMILLQADAGQIVYTFGNFVVGGNLIVGIVIFLIITIVQFLVITKGSERVAEVSARFSLDAMPGKQMSIDGDMRAGVIDVNEARERRATIEKESQMFGSMDGAMKFVKGDAIAGLIIIFVNILGGVTIGVTQKGLAAAEALQLYSILTVGDGMVSQVPALLIAITAGIIVTRVSSEDSSDLGSDIGKQVVAQPKAMLIGGVLLLLFGLIPGFPTVTFLILALLVGCGGYMLSRKQSRNDEANQDLQSILTSGSGAPAARTKAKTSGANKGRLGEQEAFAMTVPLLIDVDSSQQEALEAIALNDELVRVRRALYLDLGVPFPGIHLRFNEGMGEGEYIISLQEVPVARGELKAGYLLVRESVSQLELLGIPYEKGEHLLPDQEAFWVSVEYEERLEKSQLEFFSHSQVLTWHLSHVLREYAEDFIGIQETRYLLEQMEGGYGELIKEVQRIVPLQRMTEILQRLVGEDISIRNMRSILEAMVEWGQKEKDVVQLTEYIRSSLKRYICYKYANGNNILPAYLFDQEVEEKIRSGVRQTSAGSYLALEPAVTESLLEQVRKTIGDLSQIQSKPVLIVSMDIRRYVRKLIESEYYGLPVLSYQELTQQINIQPLGRICL</sequence>
<feature type="chain" id="PRO_0000190031" description="Low calcium response locus protein D">
    <location>
        <begin position="1"/>
        <end position="704"/>
    </location>
</feature>
<feature type="transmembrane region" description="Helical" evidence="1">
    <location>
        <begin position="18"/>
        <end position="35"/>
    </location>
</feature>
<feature type="transmembrane region" description="Helical" evidence="1">
    <location>
        <begin position="42"/>
        <end position="61"/>
    </location>
</feature>
<feature type="transmembrane region" description="Helical" evidence="1">
    <location>
        <begin position="108"/>
        <end position="132"/>
    </location>
</feature>
<feature type="transmembrane region" description="Helical" evidence="1">
    <location>
        <begin position="200"/>
        <end position="220"/>
    </location>
</feature>
<feature type="transmembrane region" description="Helical" evidence="1">
    <location>
        <begin position="235"/>
        <end position="259"/>
    </location>
</feature>
<feature type="transmembrane region" description="Helical" evidence="1">
    <location>
        <begin position="278"/>
        <end position="297"/>
    </location>
</feature>
<feature type="transmembrane region" description="Helical" evidence="1">
    <location>
        <begin position="304"/>
        <end position="320"/>
    </location>
</feature>
<keyword id="KW-0997">Cell inner membrane</keyword>
<keyword id="KW-1003">Cell membrane</keyword>
<keyword id="KW-0472">Membrane</keyword>
<keyword id="KW-0614">Plasmid</keyword>
<keyword id="KW-0653">Protein transport</keyword>
<keyword id="KW-0812">Transmembrane</keyword>
<keyword id="KW-1133">Transmembrane helix</keyword>
<keyword id="KW-0813">Transport</keyword>
<keyword id="KW-0843">Virulence</keyword>
<organism>
    <name type="scientific">Yersinia pseudotuberculosis serotype I (strain IP32953)</name>
    <dbReference type="NCBI Taxonomy" id="273123"/>
    <lineage>
        <taxon>Bacteria</taxon>
        <taxon>Pseudomonadati</taxon>
        <taxon>Pseudomonadota</taxon>
        <taxon>Gammaproteobacteria</taxon>
        <taxon>Enterobacterales</taxon>
        <taxon>Yersiniaceae</taxon>
        <taxon>Yersinia</taxon>
    </lineage>
</organism>
<reference key="1">
    <citation type="submission" date="1992-11" db="EMBL/GenBank/DDBJ databases">
        <title>The LcrD protein of Yersinia pseudotuberculosis belongs to a novel protein family involved in surface presentation of virulence determinants.</title>
        <authorList>
            <person name="Bergman T."/>
            <person name="Forsberg A."/>
            <person name="Backman A."/>
            <person name="Wolf-Watz H."/>
        </authorList>
    </citation>
    <scope>NUCLEOTIDE SEQUENCE [GENOMIC DNA]</scope>
    <source>
        <strain>YPIII / Serotype O:3</strain>
        <plasmid>pIB1</plasmid>
    </source>
</reference>
<reference key="2">
    <citation type="journal article" date="2004" name="Proc. Natl. Acad. Sci. U.S.A.">
        <title>Insights into the evolution of Yersinia pestis through whole-genome comparison with Yersinia pseudotuberculosis.</title>
        <authorList>
            <person name="Chain P.S.G."/>
            <person name="Carniel E."/>
            <person name="Larimer F.W."/>
            <person name="Lamerdin J."/>
            <person name="Stoutland P.O."/>
            <person name="Regala W.M."/>
            <person name="Georgescu A.M."/>
            <person name="Vergez L.M."/>
            <person name="Land M.L."/>
            <person name="Motin V.L."/>
            <person name="Brubaker R.R."/>
            <person name="Fowler J."/>
            <person name="Hinnebusch J."/>
            <person name="Marceau M."/>
            <person name="Medigue C."/>
            <person name="Simonet M."/>
            <person name="Chenal-Francisque V."/>
            <person name="Souza B."/>
            <person name="Dacheux D."/>
            <person name="Elliott J.M."/>
            <person name="Derbise A."/>
            <person name="Hauser L.J."/>
            <person name="Garcia E."/>
        </authorList>
    </citation>
    <scope>NUCLEOTIDE SEQUENCE [LARGE SCALE GENOMIC DNA]</scope>
    <source>
        <strain>IP32953</strain>
        <plasmid>pYV</plasmid>
    </source>
</reference>
<comment type="function">
    <text>Could be involved in the secretion of the yop virulence proteins.</text>
</comment>
<comment type="subcellular location">
    <subcellularLocation>
        <location>Cell inner membrane</location>
        <topology>Multi-pass membrane protein</topology>
    </subcellularLocation>
</comment>
<comment type="similarity">
    <text evidence="2">Belongs to the FHIPEP (flagella/HR/invasion proteins export pore) family.</text>
</comment>
<evidence type="ECO:0000255" key="1"/>
<evidence type="ECO:0000305" key="2"/>
<name>LCRD_YERPS</name>
<dbReference type="EMBL" id="M96850">
    <property type="protein sequence ID" value="AAA27647.1"/>
    <property type="molecule type" value="Genomic_DNA"/>
</dbReference>
<dbReference type="EMBL" id="BX936399">
    <property type="protein sequence ID" value="CAF25403.1"/>
    <property type="molecule type" value="Genomic_DNA"/>
</dbReference>
<dbReference type="RefSeq" id="WP_002212971.1">
    <property type="nucleotide sequence ID" value="NZ_CP009711.1"/>
</dbReference>
<dbReference type="SMR" id="P69956"/>
<dbReference type="KEGG" id="ypo:BZ17_4273"/>
<dbReference type="KEGG" id="yps:pYV0060"/>
<dbReference type="PATRIC" id="fig|273123.14.peg.4509"/>
<dbReference type="Proteomes" id="UP000001011">
    <property type="component" value="Plasmid pYV"/>
</dbReference>
<dbReference type="GO" id="GO:0005886">
    <property type="term" value="C:plasma membrane"/>
    <property type="evidence" value="ECO:0007669"/>
    <property type="project" value="UniProtKB-SubCell"/>
</dbReference>
<dbReference type="GO" id="GO:0009306">
    <property type="term" value="P:protein secretion"/>
    <property type="evidence" value="ECO:0007669"/>
    <property type="project" value="InterPro"/>
</dbReference>
<dbReference type="Gene3D" id="3.40.30.60">
    <property type="entry name" value="FHIPEP family, domain 1"/>
    <property type="match status" value="1"/>
</dbReference>
<dbReference type="Gene3D" id="1.10.8.540">
    <property type="entry name" value="FHIPEP family, domain 3"/>
    <property type="match status" value="1"/>
</dbReference>
<dbReference type="Gene3D" id="3.40.50.12790">
    <property type="entry name" value="FHIPEP family, domain 4"/>
    <property type="match status" value="1"/>
</dbReference>
<dbReference type="InterPro" id="IPR042194">
    <property type="entry name" value="FHIPEP_1"/>
</dbReference>
<dbReference type="InterPro" id="IPR042193">
    <property type="entry name" value="FHIPEP_3"/>
</dbReference>
<dbReference type="InterPro" id="IPR042196">
    <property type="entry name" value="FHIPEP_4"/>
</dbReference>
<dbReference type="InterPro" id="IPR025505">
    <property type="entry name" value="FHIPEP_CS"/>
</dbReference>
<dbReference type="InterPro" id="IPR001712">
    <property type="entry name" value="T3SS_FHIPEP"/>
</dbReference>
<dbReference type="InterPro" id="IPR006302">
    <property type="entry name" value="T3SS_HrcV"/>
</dbReference>
<dbReference type="NCBIfam" id="TIGR01399">
    <property type="entry name" value="hrcV"/>
    <property type="match status" value="1"/>
</dbReference>
<dbReference type="PANTHER" id="PTHR30161">
    <property type="entry name" value="FLAGELLAR EXPORT PROTEIN, MEMBRANE FLHA SUBUNIT-RELATED"/>
    <property type="match status" value="1"/>
</dbReference>
<dbReference type="PANTHER" id="PTHR30161:SF2">
    <property type="entry name" value="INVASION PROTEIN INVA"/>
    <property type="match status" value="1"/>
</dbReference>
<dbReference type="Pfam" id="PF00771">
    <property type="entry name" value="FHIPEP"/>
    <property type="match status" value="1"/>
</dbReference>
<dbReference type="PIRSF" id="PIRSF005419">
    <property type="entry name" value="FlhA"/>
    <property type="match status" value="1"/>
</dbReference>
<dbReference type="PRINTS" id="PR00949">
    <property type="entry name" value="TYPE3IMAPROT"/>
</dbReference>
<dbReference type="PROSITE" id="PS00994">
    <property type="entry name" value="FHIPEP"/>
    <property type="match status" value="1"/>
</dbReference>